<comment type="function">
    <text evidence="5 7">May potentiate Xylotoxin(1)-Xa1a DRG activation and cell lysis, since the orthologous A.mellifera PA2 potentiates Xylotoxin(1)-Xa1a DRG activation and cell lysis. In vivo, intraplantar injection in mice may potentiate spontaneous pain behaviors and paw swelling caused by Xylotoxin(1)-Xa1a, since the orthologous A.mellifera PA2 shows this effect (PubMed:36550366). PLA2 catalyzes the calcium-dependent hydrolysis of the 2-acyl groups in 3-sn-phosphoglycerides (Probable).</text>
</comment>
<comment type="catalytic activity">
    <reaction evidence="4">
        <text>a 1,2-diacyl-sn-glycero-3-phosphocholine + H2O = a 1-acyl-sn-glycero-3-phosphocholine + a fatty acid + H(+)</text>
        <dbReference type="Rhea" id="RHEA:15801"/>
        <dbReference type="ChEBI" id="CHEBI:15377"/>
        <dbReference type="ChEBI" id="CHEBI:15378"/>
        <dbReference type="ChEBI" id="CHEBI:28868"/>
        <dbReference type="ChEBI" id="CHEBI:57643"/>
        <dbReference type="ChEBI" id="CHEBI:58168"/>
        <dbReference type="EC" id="3.1.1.4"/>
    </reaction>
</comment>
<comment type="cofactor">
    <cofactor evidence="2">
        <name>Ca(2+)</name>
        <dbReference type="ChEBI" id="CHEBI:29108"/>
    </cofactor>
    <text evidence="2">Binds 1 Ca(2+) ion.</text>
</comment>
<comment type="subcellular location">
    <subcellularLocation>
        <location evidence="5">Secreted</location>
    </subcellularLocation>
</comment>
<comment type="tissue specificity">
    <text evidence="8">Expressed by the venom gland.</text>
</comment>
<comment type="similarity">
    <text evidence="7">Belongs to the phospholipase A2 family. Group III subfamily.</text>
</comment>
<name>PA2_XYLAR</name>
<dbReference type="EC" id="3.1.1.4" evidence="2"/>
<dbReference type="EMBL" id="ON586844">
    <property type="protein sequence ID" value="UTO68651.1"/>
    <property type="molecule type" value="mRNA"/>
</dbReference>
<dbReference type="GO" id="GO:0005576">
    <property type="term" value="C:extracellular region"/>
    <property type="evidence" value="ECO:0007669"/>
    <property type="project" value="UniProtKB-SubCell"/>
</dbReference>
<dbReference type="GO" id="GO:0046872">
    <property type="term" value="F:metal ion binding"/>
    <property type="evidence" value="ECO:0007669"/>
    <property type="project" value="UniProtKB-KW"/>
</dbReference>
<dbReference type="GO" id="GO:0004623">
    <property type="term" value="F:phospholipase A2 activity"/>
    <property type="evidence" value="ECO:0007669"/>
    <property type="project" value="InterPro"/>
</dbReference>
<dbReference type="GO" id="GO:0090729">
    <property type="term" value="F:toxin activity"/>
    <property type="evidence" value="ECO:0007669"/>
    <property type="project" value="UniProtKB-KW"/>
</dbReference>
<dbReference type="GO" id="GO:0050482">
    <property type="term" value="P:arachidonate secretion"/>
    <property type="evidence" value="ECO:0007669"/>
    <property type="project" value="InterPro"/>
</dbReference>
<dbReference type="GO" id="GO:0016042">
    <property type="term" value="P:lipid catabolic process"/>
    <property type="evidence" value="ECO:0007669"/>
    <property type="project" value="UniProtKB-KW"/>
</dbReference>
<dbReference type="GO" id="GO:0006644">
    <property type="term" value="P:phospholipid metabolic process"/>
    <property type="evidence" value="ECO:0007669"/>
    <property type="project" value="InterPro"/>
</dbReference>
<dbReference type="CDD" id="cd04704">
    <property type="entry name" value="PLA2_bee_venom_like"/>
    <property type="match status" value="1"/>
</dbReference>
<dbReference type="FunFam" id="1.20.90.10:FF:000002">
    <property type="entry name" value="Phospholipase A2 group III"/>
    <property type="match status" value="1"/>
</dbReference>
<dbReference type="Gene3D" id="1.20.90.10">
    <property type="entry name" value="Phospholipase A2 domain"/>
    <property type="match status" value="1"/>
</dbReference>
<dbReference type="InterPro" id="IPR016090">
    <property type="entry name" value="PLipase_A2_dom"/>
</dbReference>
<dbReference type="InterPro" id="IPR036444">
    <property type="entry name" value="PLipase_A2_dom_sf"/>
</dbReference>
<dbReference type="InterPro" id="IPR033113">
    <property type="entry name" value="PLipase_A2_His_AS"/>
</dbReference>
<dbReference type="PANTHER" id="PTHR12253">
    <property type="entry name" value="RH14732P"/>
    <property type="match status" value="1"/>
</dbReference>
<dbReference type="Pfam" id="PF05826">
    <property type="entry name" value="Phospholip_A2_2"/>
    <property type="match status" value="1"/>
</dbReference>
<dbReference type="SMART" id="SM00085">
    <property type="entry name" value="PA2c"/>
    <property type="match status" value="1"/>
</dbReference>
<dbReference type="SUPFAM" id="SSF48619">
    <property type="entry name" value="Phospholipase A2, PLA2"/>
    <property type="match status" value="1"/>
</dbReference>
<dbReference type="PROSITE" id="PS00118">
    <property type="entry name" value="PA2_HIS"/>
    <property type="match status" value="1"/>
</dbReference>
<sequence>MHALRSSVLALWLCLHVSVRAWMTYRSANGLDEYEPEDRIIFLGTKWCGNGNVAEGPEDLGPLKETDACCREHDMCPDLIAAGQSKHGLTNTASYTRLNCGCDEKFYNCLKNSAETGSGAVRFTYFTVLGTKCYRNEHPLICVKKGWFSCSKYELDKSQPKRYQWFDVSSNFAFPRMLT</sequence>
<accession>P0DXZ6</accession>
<protein>
    <recommendedName>
        <fullName>Phospholipase A2</fullName>
        <shortName evidence="7">PA2</shortName>
        <shortName evidence="6">PLA2</shortName>
        <ecNumber evidence="2">3.1.1.4</ecNumber>
    </recommendedName>
    <alternativeName>
        <fullName>Phosphatidylcholine 2-acylhydrolase</fullName>
    </alternativeName>
</protein>
<proteinExistence type="evidence at protein level"/>
<reference key="1">
    <citation type="journal article" date="2022" name="Sci. Rep.">
        <title>Venom composition and pain-causing toxins of the Australian great carpenter bee Xylocopa aruana.</title>
        <authorList>
            <person name="Shi N."/>
            <person name="Szanto T.G."/>
            <person name="He J."/>
            <person name="Schroeder C.I."/>
            <person name="Walker A.A."/>
            <person name="Deuis J.R."/>
            <person name="Vetter I."/>
            <person name="Panyi G."/>
            <person name="King G.F."/>
            <person name="Robinson S.D."/>
        </authorList>
    </citation>
    <scope>NUCLEOTIDE SEQUENCE [MRNA]</scope>
    <scope>IDENTIFICATION BY MASS SPECTROMETRY</scope>
    <scope>SUBCELLULAR LOCATION</scope>
    <source>
        <tissue>Venom</tissue>
        <tissue>Venom gland</tissue>
    </source>
</reference>
<evidence type="ECO:0000250" key="1">
    <source>
        <dbReference type="UniProtKB" id="I7GQA7"/>
    </source>
</evidence>
<evidence type="ECO:0000250" key="2">
    <source>
        <dbReference type="UniProtKB" id="P00630"/>
    </source>
</evidence>
<evidence type="ECO:0000255" key="3"/>
<evidence type="ECO:0000255" key="4">
    <source>
        <dbReference type="PROSITE-ProRule" id="PRU10035"/>
    </source>
</evidence>
<evidence type="ECO:0000269" key="5">
    <source>
    </source>
</evidence>
<evidence type="ECO:0000303" key="6">
    <source>
    </source>
</evidence>
<evidence type="ECO:0000305" key="7"/>
<evidence type="ECO:0000305" key="8">
    <source>
    </source>
</evidence>
<feature type="signal peptide" evidence="3">
    <location>
        <begin position="1"/>
        <end position="21"/>
    </location>
</feature>
<feature type="propeptide" id="PRO_0000461570" evidence="1">
    <location>
        <begin position="22"/>
        <end position="39"/>
    </location>
</feature>
<feature type="chain" id="PRO_0000461571" description="Phospholipase A2" evidence="1">
    <location>
        <begin position="40"/>
        <end position="179"/>
    </location>
</feature>
<feature type="active site" evidence="2">
    <location>
        <position position="73"/>
    </location>
</feature>
<feature type="active site" evidence="2">
    <location>
        <position position="103"/>
    </location>
</feature>
<feature type="binding site" evidence="2">
    <location>
        <position position="47"/>
    </location>
    <ligand>
        <name>Ca(2+)</name>
        <dbReference type="ChEBI" id="CHEBI:29108"/>
    </ligand>
</feature>
<feature type="binding site" evidence="2">
    <location>
        <position position="49"/>
    </location>
    <ligand>
        <name>Ca(2+)</name>
        <dbReference type="ChEBI" id="CHEBI:29108"/>
    </ligand>
</feature>
<feature type="binding site" evidence="2">
    <location>
        <position position="51"/>
    </location>
    <ligand>
        <name>Ca(2+)</name>
        <dbReference type="ChEBI" id="CHEBI:29108"/>
    </ligand>
</feature>
<feature type="binding site" evidence="2">
    <location>
        <position position="74"/>
    </location>
    <ligand>
        <name>Ca(2+)</name>
        <dbReference type="ChEBI" id="CHEBI:29108"/>
    </ligand>
</feature>
<feature type="disulfide bond" evidence="2">
    <location>
        <begin position="48"/>
        <end position="70"/>
    </location>
</feature>
<feature type="disulfide bond" evidence="2">
    <location>
        <begin position="69"/>
        <end position="109"/>
    </location>
</feature>
<feature type="disulfide bond" evidence="2">
    <location>
        <begin position="76"/>
        <end position="102"/>
    </location>
</feature>
<feature type="disulfide bond" evidence="2">
    <location>
        <begin position="100"/>
        <end position="133"/>
    </location>
</feature>
<feature type="disulfide bond" evidence="2">
    <location>
        <begin position="142"/>
        <end position="150"/>
    </location>
</feature>
<organism>
    <name type="scientific">Xylocopa aruana</name>
    <name type="common">Great carpenter bee</name>
    <dbReference type="NCBI Taxonomy" id="135674"/>
    <lineage>
        <taxon>Eukaryota</taxon>
        <taxon>Metazoa</taxon>
        <taxon>Ecdysozoa</taxon>
        <taxon>Arthropoda</taxon>
        <taxon>Hexapoda</taxon>
        <taxon>Insecta</taxon>
        <taxon>Pterygota</taxon>
        <taxon>Neoptera</taxon>
        <taxon>Endopterygota</taxon>
        <taxon>Hymenoptera</taxon>
        <taxon>Apocrita</taxon>
        <taxon>Aculeata</taxon>
        <taxon>Apoidea</taxon>
        <taxon>Anthophila</taxon>
        <taxon>Apidae</taxon>
        <taxon>Xylocopa</taxon>
        <taxon>Koptortosoma</taxon>
    </lineage>
</organism>
<keyword id="KW-0106">Calcium</keyword>
<keyword id="KW-1015">Disulfide bond</keyword>
<keyword id="KW-0378">Hydrolase</keyword>
<keyword id="KW-0442">Lipid degradation</keyword>
<keyword id="KW-0443">Lipid metabolism</keyword>
<keyword id="KW-0479">Metal-binding</keyword>
<keyword id="KW-0964">Secreted</keyword>
<keyword id="KW-0732">Signal</keyword>
<keyword id="KW-0800">Toxin</keyword>